<proteinExistence type="inferred from homology"/>
<name>KDSB_NEIG1</name>
<comment type="function">
    <text evidence="1">Activates KDO (a required 8-carbon sugar) for incorporation into bacterial lipopolysaccharide in Gram-negative bacteria.</text>
</comment>
<comment type="catalytic activity">
    <reaction evidence="1">
        <text>3-deoxy-alpha-D-manno-oct-2-ulosonate + CTP = CMP-3-deoxy-beta-D-manno-octulosonate + diphosphate</text>
        <dbReference type="Rhea" id="RHEA:23448"/>
        <dbReference type="ChEBI" id="CHEBI:33019"/>
        <dbReference type="ChEBI" id="CHEBI:37563"/>
        <dbReference type="ChEBI" id="CHEBI:85986"/>
        <dbReference type="ChEBI" id="CHEBI:85987"/>
        <dbReference type="EC" id="2.7.7.38"/>
    </reaction>
</comment>
<comment type="pathway">
    <text evidence="1">Nucleotide-sugar biosynthesis; CMP-3-deoxy-D-manno-octulosonate biosynthesis; CMP-3-deoxy-D-manno-octulosonate from 3-deoxy-D-manno-octulosonate and CTP: step 1/1.</text>
</comment>
<comment type="pathway">
    <text evidence="1">Bacterial outer membrane biogenesis; lipopolysaccharide biosynthesis.</text>
</comment>
<comment type="subcellular location">
    <subcellularLocation>
        <location evidence="1">Cytoplasm</location>
    </subcellularLocation>
</comment>
<comment type="similarity">
    <text evidence="1">Belongs to the KdsB family.</text>
</comment>
<dbReference type="EC" id="2.7.7.38" evidence="1"/>
<dbReference type="EMBL" id="AE004969">
    <property type="protein sequence ID" value="AAW88998.1"/>
    <property type="molecule type" value="Genomic_DNA"/>
</dbReference>
<dbReference type="RefSeq" id="WP_003690726.1">
    <property type="nucleotide sequence ID" value="NC_002946.2"/>
</dbReference>
<dbReference type="RefSeq" id="YP_207410.1">
    <property type="nucleotide sequence ID" value="NC_002946.2"/>
</dbReference>
<dbReference type="SMR" id="Q5F9Y9"/>
<dbReference type="STRING" id="242231.NGO_0245"/>
<dbReference type="GeneID" id="66752581"/>
<dbReference type="KEGG" id="ngo:NGO_0245"/>
<dbReference type="PATRIC" id="fig|242231.10.peg.302"/>
<dbReference type="HOGENOM" id="CLU_065038_1_0_4"/>
<dbReference type="UniPathway" id="UPA00030"/>
<dbReference type="UniPathway" id="UPA00358">
    <property type="reaction ID" value="UER00476"/>
</dbReference>
<dbReference type="Proteomes" id="UP000000535">
    <property type="component" value="Chromosome"/>
</dbReference>
<dbReference type="GO" id="GO:0005829">
    <property type="term" value="C:cytosol"/>
    <property type="evidence" value="ECO:0007669"/>
    <property type="project" value="TreeGrafter"/>
</dbReference>
<dbReference type="GO" id="GO:0008690">
    <property type="term" value="F:3-deoxy-manno-octulosonate cytidylyltransferase activity"/>
    <property type="evidence" value="ECO:0007669"/>
    <property type="project" value="UniProtKB-UniRule"/>
</dbReference>
<dbReference type="GO" id="GO:0033468">
    <property type="term" value="P:CMP-keto-3-deoxy-D-manno-octulosonic acid biosynthetic process"/>
    <property type="evidence" value="ECO:0007669"/>
    <property type="project" value="UniProtKB-UniRule"/>
</dbReference>
<dbReference type="GO" id="GO:0009103">
    <property type="term" value="P:lipopolysaccharide biosynthetic process"/>
    <property type="evidence" value="ECO:0007669"/>
    <property type="project" value="UniProtKB-UniRule"/>
</dbReference>
<dbReference type="CDD" id="cd02517">
    <property type="entry name" value="CMP-KDO-Synthetase"/>
    <property type="match status" value="1"/>
</dbReference>
<dbReference type="FunFam" id="3.90.550.10:FF:000011">
    <property type="entry name" value="3-deoxy-manno-octulosonate cytidylyltransferase"/>
    <property type="match status" value="1"/>
</dbReference>
<dbReference type="Gene3D" id="3.90.550.10">
    <property type="entry name" value="Spore Coat Polysaccharide Biosynthesis Protein SpsA, Chain A"/>
    <property type="match status" value="1"/>
</dbReference>
<dbReference type="HAMAP" id="MF_00057">
    <property type="entry name" value="KdsB"/>
    <property type="match status" value="1"/>
</dbReference>
<dbReference type="InterPro" id="IPR003329">
    <property type="entry name" value="Cytidylyl_trans"/>
</dbReference>
<dbReference type="InterPro" id="IPR004528">
    <property type="entry name" value="KdsB"/>
</dbReference>
<dbReference type="InterPro" id="IPR029044">
    <property type="entry name" value="Nucleotide-diphossugar_trans"/>
</dbReference>
<dbReference type="NCBIfam" id="TIGR00466">
    <property type="entry name" value="kdsB"/>
    <property type="match status" value="1"/>
</dbReference>
<dbReference type="NCBIfam" id="NF003952">
    <property type="entry name" value="PRK05450.1-5"/>
    <property type="match status" value="1"/>
</dbReference>
<dbReference type="NCBIfam" id="NF009905">
    <property type="entry name" value="PRK13368.1"/>
    <property type="match status" value="1"/>
</dbReference>
<dbReference type="PANTHER" id="PTHR42866">
    <property type="entry name" value="3-DEOXY-MANNO-OCTULOSONATE CYTIDYLYLTRANSFERASE"/>
    <property type="match status" value="1"/>
</dbReference>
<dbReference type="PANTHER" id="PTHR42866:SF2">
    <property type="entry name" value="3-DEOXY-MANNO-OCTULOSONATE CYTIDYLYLTRANSFERASE, MITOCHONDRIAL"/>
    <property type="match status" value="1"/>
</dbReference>
<dbReference type="Pfam" id="PF02348">
    <property type="entry name" value="CTP_transf_3"/>
    <property type="match status" value="1"/>
</dbReference>
<dbReference type="SUPFAM" id="SSF53448">
    <property type="entry name" value="Nucleotide-diphospho-sugar transferases"/>
    <property type="match status" value="1"/>
</dbReference>
<evidence type="ECO:0000255" key="1">
    <source>
        <dbReference type="HAMAP-Rule" id="MF_00057"/>
    </source>
</evidence>
<gene>
    <name evidence="1" type="primary">kdsB</name>
    <name type="ordered locus">NGO_0245</name>
</gene>
<protein>
    <recommendedName>
        <fullName evidence="1">3-deoxy-manno-octulosonate cytidylyltransferase</fullName>
        <ecNumber evidence="1">2.7.7.38</ecNumber>
    </recommendedName>
    <alternativeName>
        <fullName evidence="1">CMP-2-keto-3-deoxyoctulosonic acid synthase</fullName>
        <shortName evidence="1">CKS</shortName>
        <shortName evidence="1">CMP-KDO synthase</shortName>
    </alternativeName>
</protein>
<sequence>MTEFVVLIPARLDSSRLPGKALADIHGKPMVVRVAEQAAKSKAARVVVATDHPDIQTACQAHGIEVVMTSNRHESGTTRLAEAAAALKLPPHLIVVNVQGDEPLIAPELIDRTAEVLVENNVQMATAGHELHDFDELMNPNAVKVVLDKNGNAIYFSRAPIPYPRDAMRAGKREMPSETAVLRHIGIYAYRVGFLQRYAEMSVSPLETIESLEQLRVLWHGYPIAVETAKEAPAAGVDTQEDLDRVRAVFQTV</sequence>
<reference key="1">
    <citation type="submission" date="2003-03" db="EMBL/GenBank/DDBJ databases">
        <title>The complete genome sequence of Neisseria gonorrhoeae.</title>
        <authorList>
            <person name="Lewis L.A."/>
            <person name="Gillaspy A.F."/>
            <person name="McLaughlin R.E."/>
            <person name="Gipson M."/>
            <person name="Ducey T.F."/>
            <person name="Ownbey T."/>
            <person name="Hartman K."/>
            <person name="Nydick C."/>
            <person name="Carson M.B."/>
            <person name="Vaughn J."/>
            <person name="Thomson C."/>
            <person name="Song L."/>
            <person name="Lin S."/>
            <person name="Yuan X."/>
            <person name="Najar F."/>
            <person name="Zhan M."/>
            <person name="Ren Q."/>
            <person name="Zhu H."/>
            <person name="Qi S."/>
            <person name="Kenton S.M."/>
            <person name="Lai H."/>
            <person name="White J.D."/>
            <person name="Clifton S."/>
            <person name="Roe B.A."/>
            <person name="Dyer D.W."/>
        </authorList>
    </citation>
    <scope>NUCLEOTIDE SEQUENCE [LARGE SCALE GENOMIC DNA]</scope>
    <source>
        <strain>ATCC 700825 / FA 1090</strain>
    </source>
</reference>
<organism>
    <name type="scientific">Neisseria gonorrhoeae (strain ATCC 700825 / FA 1090)</name>
    <dbReference type="NCBI Taxonomy" id="242231"/>
    <lineage>
        <taxon>Bacteria</taxon>
        <taxon>Pseudomonadati</taxon>
        <taxon>Pseudomonadota</taxon>
        <taxon>Betaproteobacteria</taxon>
        <taxon>Neisseriales</taxon>
        <taxon>Neisseriaceae</taxon>
        <taxon>Neisseria</taxon>
    </lineage>
</organism>
<keyword id="KW-0963">Cytoplasm</keyword>
<keyword id="KW-0448">Lipopolysaccharide biosynthesis</keyword>
<keyword id="KW-0548">Nucleotidyltransferase</keyword>
<keyword id="KW-1185">Reference proteome</keyword>
<keyword id="KW-0808">Transferase</keyword>
<feature type="chain" id="PRO_0000370101" description="3-deoxy-manno-octulosonate cytidylyltransferase">
    <location>
        <begin position="1"/>
        <end position="253"/>
    </location>
</feature>
<accession>Q5F9Y9</accession>